<reference key="1">
    <citation type="journal article" date="2008" name="PLoS Genet.">
        <title>Genomic islands in the pathogenic filamentous fungus Aspergillus fumigatus.</title>
        <authorList>
            <person name="Fedorova N.D."/>
            <person name="Khaldi N."/>
            <person name="Joardar V.S."/>
            <person name="Maiti R."/>
            <person name="Amedeo P."/>
            <person name="Anderson M.J."/>
            <person name="Crabtree J."/>
            <person name="Silva J.C."/>
            <person name="Badger J.H."/>
            <person name="Albarraq A."/>
            <person name="Angiuoli S."/>
            <person name="Bussey H."/>
            <person name="Bowyer P."/>
            <person name="Cotty P.J."/>
            <person name="Dyer P.S."/>
            <person name="Egan A."/>
            <person name="Galens K."/>
            <person name="Fraser-Liggett C.M."/>
            <person name="Haas B.J."/>
            <person name="Inman J.M."/>
            <person name="Kent R."/>
            <person name="Lemieux S."/>
            <person name="Malavazi I."/>
            <person name="Orvis J."/>
            <person name="Roemer T."/>
            <person name="Ronning C.M."/>
            <person name="Sundaram J.P."/>
            <person name="Sutton G."/>
            <person name="Turner G."/>
            <person name="Venter J.C."/>
            <person name="White O.R."/>
            <person name="Whitty B.R."/>
            <person name="Youngman P."/>
            <person name="Wolfe K.H."/>
            <person name="Goldman G.H."/>
            <person name="Wortman J.R."/>
            <person name="Jiang B."/>
            <person name="Denning D.W."/>
            <person name="Nierman W.C."/>
        </authorList>
    </citation>
    <scope>NUCLEOTIDE SEQUENCE [LARGE SCALE GENOMIC DNA]</scope>
    <source>
        <strain>ATCC 1020 / DSM 3700 / CBS 544.65 / FGSC A1164 / JCM 1740 / NRRL 181 / WB 181</strain>
    </source>
</reference>
<accession>A1D1E6</accession>
<feature type="signal peptide" evidence="2">
    <location>
        <begin position="1"/>
        <end position="14"/>
    </location>
</feature>
<feature type="chain" id="PRO_0000394920" description="Probable alpha/beta-glucosidase agdC">
    <location>
        <begin position="15"/>
        <end position="881"/>
    </location>
</feature>
<feature type="region of interest" description="Disordered" evidence="4">
    <location>
        <begin position="440"/>
        <end position="485"/>
    </location>
</feature>
<feature type="compositionally biased region" description="Pro residues" evidence="4">
    <location>
        <begin position="448"/>
        <end position="463"/>
    </location>
</feature>
<feature type="active site" description="Nucleophile" evidence="3">
    <location>
        <position position="422"/>
    </location>
</feature>
<feature type="active site" evidence="1">
    <location>
        <position position="425"/>
    </location>
</feature>
<feature type="active site" description="Proton donor" evidence="1">
    <location>
        <position position="571"/>
    </location>
</feature>
<feature type="glycosylation site" description="N-linked (GlcNAc...) asparagine" evidence="2">
    <location>
        <position position="171"/>
    </location>
</feature>
<feature type="glycosylation site" description="N-linked (GlcNAc...) asparagine" evidence="2">
    <location>
        <position position="293"/>
    </location>
</feature>
<feature type="glycosylation site" description="N-linked (GlcNAc...) asparagine" evidence="2">
    <location>
        <position position="373"/>
    </location>
</feature>
<feature type="glycosylation site" description="N-linked (GlcNAc...) asparagine" evidence="2">
    <location>
        <position position="506"/>
    </location>
</feature>
<feature type="glycosylation site" description="N-linked (GlcNAc...) asparagine" evidence="2">
    <location>
        <position position="572"/>
    </location>
</feature>
<feature type="glycosylation site" description="N-linked (GlcNAc...) asparagine" evidence="2">
    <location>
        <position position="608"/>
    </location>
</feature>
<feature type="glycosylation site" description="N-linked (GlcNAc...) asparagine" evidence="2">
    <location>
        <position position="742"/>
    </location>
</feature>
<comment type="function">
    <text evidence="1">Glucosidase involved in the degradation of cellulosic biomass. Has both alpha- and beta-glucosidase activity (By similarity).</text>
</comment>
<comment type="catalytic activity">
    <reaction>
        <text>Hydrolysis of terminal, non-reducing (1-&gt;4)-linked alpha-D-glucose residues with release of alpha-D-glucose.</text>
        <dbReference type="EC" id="3.2.1.20"/>
    </reaction>
</comment>
<comment type="catalytic activity">
    <reaction>
        <text>Hydrolysis of terminal, non-reducing beta-D-glucosyl residues with release of beta-D-glucose.</text>
        <dbReference type="EC" id="3.2.1.21"/>
    </reaction>
</comment>
<comment type="subcellular location">
    <subcellularLocation>
        <location evidence="1">Secreted</location>
    </subcellularLocation>
</comment>
<comment type="similarity">
    <text evidence="5">Belongs to the glycosyl hydrolase 31 family.</text>
</comment>
<organism>
    <name type="scientific">Neosartorya fischeri (strain ATCC 1020 / DSM 3700 / CBS 544.65 / FGSC A1164 / JCM 1740 / NRRL 181 / WB 181)</name>
    <name type="common">Aspergillus fischerianus</name>
    <dbReference type="NCBI Taxonomy" id="331117"/>
    <lineage>
        <taxon>Eukaryota</taxon>
        <taxon>Fungi</taxon>
        <taxon>Dikarya</taxon>
        <taxon>Ascomycota</taxon>
        <taxon>Pezizomycotina</taxon>
        <taxon>Eurotiomycetes</taxon>
        <taxon>Eurotiomycetidae</taxon>
        <taxon>Eurotiales</taxon>
        <taxon>Aspergillaceae</taxon>
        <taxon>Aspergillus</taxon>
        <taxon>Aspergillus subgen. Fumigati</taxon>
    </lineage>
</organism>
<name>AGDC_NEOFI</name>
<gene>
    <name type="primary">agdC</name>
    <name type="ORF">NFIA_009180</name>
</gene>
<protein>
    <recommendedName>
        <fullName>Probable alpha/beta-glucosidase agdC</fullName>
        <ecNumber>3.2.1.20</ecNumber>
        <ecNumber>3.2.1.21</ecNumber>
    </recommendedName>
</protein>
<sequence>MLRSLLLLAPLVGAAVLGVRDNSQECPGYKATNIREGRNSLTADLTLAGTPCNTYGTDLKNLKLLVEYQTDKRLHVKIYDADEEVYQVPESVLPRVDGKGGSGKKSALKFDYQANPFSFKVKRGGEVLFDTSGSNLIFQSQYLNLRTWLPEDPNLYGLGEHTDSLRLETTNYTRTLWNRDAYAIPEKTNLYGTHPVYYDHRGQDGTHGVFLLNSNGMDIKIDKTEDGKQYLEYNTLGGVFDFYFFTGATPKDASIEYAKVVGLPAMQSYWTFGFHQCRYGYRDVFEVAEVVYNYTQAKIPLETMWTDIDYMDRRRVFTLDPERFPLEKLRELVTYLHNHNQRYIVMVDPAVSVSDNVGYNDGMEQGIFLQTQNGSLYKGAVWPGVTAYPDWFHPDIQKYWNDQFAKFFDRKTGVDIDGLWIDMNEAANFCPYPCSDPEGYSRDNDLPPAAPPVRPSNPRPLPGFPGDFQPSSSSKRSTKGSKVGLPNRDLINPPYMIRNEAGSLSNKTINTDIIHAGEGYAEYDTHNLYGTMMSSASRNAMQHRRPEVRPLVITRSTYAGAGAHVGHWLGDNISEWSKYRVSIAQMLAFASMFQVPMIGSDVCGFGGNTTEELCARWARLGAFYTFFRNHNEITGIPQEFYRWPTVAESARKAIDIRYRLLDYIYTAFHRQTQTGEPFLQPMFYLYPKDKNTFSNQLQFFYGDAILVSPVTDGSQTSVDAYFPDDIFYDWHTGAALRGRGANVTLGNIDVTEIPIHIRGGSIIPIRSESAMTTTELRKKGFELIIAPGLDGTASGSLYLDDGDSIEQRATLELEFTYRKGRLRVKGKFGFRTDVKINAVTLLGQSAPASKSGSVASFDSGRQAVTIKTSLDLTGPSEIDLN</sequence>
<proteinExistence type="inferred from homology"/>
<dbReference type="EC" id="3.2.1.20"/>
<dbReference type="EC" id="3.2.1.21"/>
<dbReference type="EMBL" id="DS027688">
    <property type="protein sequence ID" value="EAW22239.1"/>
    <property type="molecule type" value="Genomic_DNA"/>
</dbReference>
<dbReference type="RefSeq" id="XP_001264136.1">
    <property type="nucleotide sequence ID" value="XM_001264135.1"/>
</dbReference>
<dbReference type="SMR" id="A1D1E6"/>
<dbReference type="STRING" id="331117.A1D1E6"/>
<dbReference type="GlyCosmos" id="A1D1E6">
    <property type="glycosylation" value="7 sites, No reported glycans"/>
</dbReference>
<dbReference type="EnsemblFungi" id="EAW22239">
    <property type="protein sequence ID" value="EAW22239"/>
    <property type="gene ID" value="NFIA_009180"/>
</dbReference>
<dbReference type="GeneID" id="4591952"/>
<dbReference type="KEGG" id="nfi:NFIA_009180"/>
<dbReference type="VEuPathDB" id="FungiDB:NFIA_009180"/>
<dbReference type="eggNOG" id="KOG1065">
    <property type="taxonomic scope" value="Eukaryota"/>
</dbReference>
<dbReference type="HOGENOM" id="CLU_000631_11_0_1"/>
<dbReference type="OMA" id="YKGAVWP"/>
<dbReference type="OrthoDB" id="5839090at2759"/>
<dbReference type="Proteomes" id="UP000006702">
    <property type="component" value="Unassembled WGS sequence"/>
</dbReference>
<dbReference type="GO" id="GO:0005576">
    <property type="term" value="C:extracellular region"/>
    <property type="evidence" value="ECO:0007669"/>
    <property type="project" value="UniProtKB-SubCell"/>
</dbReference>
<dbReference type="GO" id="GO:0004558">
    <property type="term" value="F:alpha-1,4-glucosidase activity"/>
    <property type="evidence" value="ECO:0007669"/>
    <property type="project" value="UniProtKB-EC"/>
</dbReference>
<dbReference type="GO" id="GO:0008422">
    <property type="term" value="F:beta-glucosidase activity"/>
    <property type="evidence" value="ECO:0007669"/>
    <property type="project" value="UniProtKB-EC"/>
</dbReference>
<dbReference type="GO" id="GO:0030246">
    <property type="term" value="F:carbohydrate binding"/>
    <property type="evidence" value="ECO:0007669"/>
    <property type="project" value="InterPro"/>
</dbReference>
<dbReference type="GO" id="GO:0071555">
    <property type="term" value="P:cell wall organization"/>
    <property type="evidence" value="ECO:0007669"/>
    <property type="project" value="UniProtKB-KW"/>
</dbReference>
<dbReference type="GO" id="GO:0000272">
    <property type="term" value="P:polysaccharide catabolic process"/>
    <property type="evidence" value="ECO:0007669"/>
    <property type="project" value="UniProtKB-KW"/>
</dbReference>
<dbReference type="CDD" id="cd06602">
    <property type="entry name" value="GH31_MGAM_SI_GAA"/>
    <property type="match status" value="1"/>
</dbReference>
<dbReference type="CDD" id="cd14752">
    <property type="entry name" value="GH31_N"/>
    <property type="match status" value="1"/>
</dbReference>
<dbReference type="Gene3D" id="3.20.20.80">
    <property type="entry name" value="Glycosidases"/>
    <property type="match status" value="1"/>
</dbReference>
<dbReference type="Gene3D" id="2.60.40.1760">
    <property type="entry name" value="glycosyl hydrolase (family 31)"/>
    <property type="match status" value="1"/>
</dbReference>
<dbReference type="Gene3D" id="2.60.40.1180">
    <property type="entry name" value="Golgi alpha-mannosidase II"/>
    <property type="match status" value="2"/>
</dbReference>
<dbReference type="InterPro" id="IPR011013">
    <property type="entry name" value="Gal_mutarotase_sf_dom"/>
</dbReference>
<dbReference type="InterPro" id="IPR030458">
    <property type="entry name" value="Glyco_hydro_31_AS"/>
</dbReference>
<dbReference type="InterPro" id="IPR048395">
    <property type="entry name" value="Glyco_hydro_31_C"/>
</dbReference>
<dbReference type="InterPro" id="IPR025887">
    <property type="entry name" value="Glyco_hydro_31_N_dom"/>
</dbReference>
<dbReference type="InterPro" id="IPR000322">
    <property type="entry name" value="Glyco_hydro_31_TIM"/>
</dbReference>
<dbReference type="InterPro" id="IPR013780">
    <property type="entry name" value="Glyco_hydro_b"/>
</dbReference>
<dbReference type="InterPro" id="IPR017853">
    <property type="entry name" value="Glycoside_hydrolase_SF"/>
</dbReference>
<dbReference type="PANTHER" id="PTHR22762">
    <property type="entry name" value="ALPHA-GLUCOSIDASE"/>
    <property type="match status" value="1"/>
</dbReference>
<dbReference type="PANTHER" id="PTHR22762:SF67">
    <property type="entry name" value="ALPHA_BETA-GLUCOSIDASE AGDC-RELATED"/>
    <property type="match status" value="1"/>
</dbReference>
<dbReference type="Pfam" id="PF13802">
    <property type="entry name" value="Gal_mutarotas_2"/>
    <property type="match status" value="1"/>
</dbReference>
<dbReference type="Pfam" id="PF01055">
    <property type="entry name" value="Glyco_hydro_31_2nd"/>
    <property type="match status" value="1"/>
</dbReference>
<dbReference type="Pfam" id="PF21365">
    <property type="entry name" value="Glyco_hydro_31_3rd"/>
    <property type="match status" value="1"/>
</dbReference>
<dbReference type="SUPFAM" id="SSF51445">
    <property type="entry name" value="(Trans)glycosidases"/>
    <property type="match status" value="1"/>
</dbReference>
<dbReference type="SUPFAM" id="SSF74650">
    <property type="entry name" value="Galactose mutarotase-like"/>
    <property type="match status" value="1"/>
</dbReference>
<dbReference type="SUPFAM" id="SSF51011">
    <property type="entry name" value="Glycosyl hydrolase domain"/>
    <property type="match status" value="1"/>
</dbReference>
<dbReference type="PROSITE" id="PS00129">
    <property type="entry name" value="GLYCOSYL_HYDROL_F31_1"/>
    <property type="match status" value="1"/>
</dbReference>
<keyword id="KW-0119">Carbohydrate metabolism</keyword>
<keyword id="KW-0961">Cell wall biogenesis/degradation</keyword>
<keyword id="KW-0325">Glycoprotein</keyword>
<keyword id="KW-0326">Glycosidase</keyword>
<keyword id="KW-0378">Hydrolase</keyword>
<keyword id="KW-0624">Polysaccharide degradation</keyword>
<keyword id="KW-1185">Reference proteome</keyword>
<keyword id="KW-0964">Secreted</keyword>
<keyword id="KW-0732">Signal</keyword>
<evidence type="ECO:0000250" key="1"/>
<evidence type="ECO:0000255" key="2"/>
<evidence type="ECO:0000255" key="3">
    <source>
        <dbReference type="PROSITE-ProRule" id="PRU10066"/>
    </source>
</evidence>
<evidence type="ECO:0000256" key="4">
    <source>
        <dbReference type="SAM" id="MobiDB-lite"/>
    </source>
</evidence>
<evidence type="ECO:0000305" key="5"/>